<comment type="function">
    <text evidence="1">Transfers an acetyl group from acetyl-CoA to L-homoserine, forming acetyl-L-homoserine.</text>
</comment>
<comment type="catalytic activity">
    <reaction evidence="1">
        <text>L-homoserine + acetyl-CoA = O-acetyl-L-homoserine + CoA</text>
        <dbReference type="Rhea" id="RHEA:13701"/>
        <dbReference type="ChEBI" id="CHEBI:57287"/>
        <dbReference type="ChEBI" id="CHEBI:57288"/>
        <dbReference type="ChEBI" id="CHEBI:57476"/>
        <dbReference type="ChEBI" id="CHEBI:57716"/>
        <dbReference type="EC" id="2.3.1.31"/>
    </reaction>
</comment>
<comment type="pathway">
    <text evidence="1">Amino-acid biosynthesis; L-methionine biosynthesis via de novo pathway; O-acetyl-L-homoserine from L-homoserine: step 1/1.</text>
</comment>
<comment type="subunit">
    <text evidence="1">Homodimer.</text>
</comment>
<comment type="subcellular location">
    <subcellularLocation>
        <location evidence="1">Cytoplasm</location>
    </subcellularLocation>
</comment>
<comment type="similarity">
    <text evidence="1">Belongs to the AB hydrolase superfamily. MetX family.</text>
</comment>
<feature type="chain" id="PRO_1000115219" description="Homoserine O-acetyltransferase">
    <location>
        <begin position="1"/>
        <end position="356"/>
    </location>
</feature>
<feature type="domain" description="AB hydrolase-1" evidence="1">
    <location>
        <begin position="50"/>
        <end position="335"/>
    </location>
</feature>
<feature type="active site" description="Nucleophile" evidence="1">
    <location>
        <position position="146"/>
    </location>
</feature>
<feature type="active site" evidence="1">
    <location>
        <position position="302"/>
    </location>
</feature>
<feature type="active site" evidence="1">
    <location>
        <position position="331"/>
    </location>
</feature>
<feature type="binding site" evidence="1">
    <location>
        <position position="215"/>
    </location>
    <ligand>
        <name>substrate</name>
    </ligand>
</feature>
<feature type="binding site" evidence="1">
    <location>
        <position position="332"/>
    </location>
    <ligand>
        <name>substrate</name>
    </ligand>
</feature>
<keyword id="KW-0012">Acyltransferase</keyword>
<keyword id="KW-0028">Amino-acid biosynthesis</keyword>
<keyword id="KW-0963">Cytoplasm</keyword>
<keyword id="KW-0486">Methionine biosynthesis</keyword>
<keyword id="KW-0808">Transferase</keyword>
<dbReference type="EC" id="2.3.1.31" evidence="1"/>
<dbReference type="EMBL" id="CP001099">
    <property type="protein sequence ID" value="ACF11042.1"/>
    <property type="molecule type" value="Genomic_DNA"/>
</dbReference>
<dbReference type="RefSeq" id="WP_012501875.1">
    <property type="nucleotide sequence ID" value="NC_011027.1"/>
</dbReference>
<dbReference type="SMR" id="B3QM89"/>
<dbReference type="STRING" id="517417.Cpar_0622"/>
<dbReference type="ESTHER" id="chlp8-metx">
    <property type="family name" value="Homoserine_transacetylase"/>
</dbReference>
<dbReference type="KEGG" id="cpc:Cpar_0622"/>
<dbReference type="eggNOG" id="COG2021">
    <property type="taxonomic scope" value="Bacteria"/>
</dbReference>
<dbReference type="HOGENOM" id="CLU_028760_1_2_10"/>
<dbReference type="OrthoDB" id="9800754at2"/>
<dbReference type="UniPathway" id="UPA00051">
    <property type="reaction ID" value="UER00074"/>
</dbReference>
<dbReference type="Proteomes" id="UP000008811">
    <property type="component" value="Chromosome"/>
</dbReference>
<dbReference type="GO" id="GO:0005737">
    <property type="term" value="C:cytoplasm"/>
    <property type="evidence" value="ECO:0007669"/>
    <property type="project" value="UniProtKB-SubCell"/>
</dbReference>
<dbReference type="GO" id="GO:0004414">
    <property type="term" value="F:homoserine O-acetyltransferase activity"/>
    <property type="evidence" value="ECO:0007669"/>
    <property type="project" value="UniProtKB-UniRule"/>
</dbReference>
<dbReference type="GO" id="GO:0009092">
    <property type="term" value="P:homoserine metabolic process"/>
    <property type="evidence" value="ECO:0007669"/>
    <property type="project" value="TreeGrafter"/>
</dbReference>
<dbReference type="GO" id="GO:0009086">
    <property type="term" value="P:methionine biosynthetic process"/>
    <property type="evidence" value="ECO:0007669"/>
    <property type="project" value="UniProtKB-UniRule"/>
</dbReference>
<dbReference type="Gene3D" id="3.40.50.1820">
    <property type="entry name" value="alpha/beta hydrolase"/>
    <property type="match status" value="1"/>
</dbReference>
<dbReference type="HAMAP" id="MF_00296">
    <property type="entry name" value="MetX_acyltransf"/>
    <property type="match status" value="1"/>
</dbReference>
<dbReference type="InterPro" id="IPR000073">
    <property type="entry name" value="AB_hydrolase_1"/>
</dbReference>
<dbReference type="InterPro" id="IPR029058">
    <property type="entry name" value="AB_hydrolase_fold"/>
</dbReference>
<dbReference type="InterPro" id="IPR008220">
    <property type="entry name" value="HAT_MetX-like"/>
</dbReference>
<dbReference type="NCBIfam" id="TIGR01392">
    <property type="entry name" value="homoserO_Ac_trn"/>
    <property type="match status" value="1"/>
</dbReference>
<dbReference type="NCBIfam" id="NF001209">
    <property type="entry name" value="PRK00175.1"/>
    <property type="match status" value="1"/>
</dbReference>
<dbReference type="PANTHER" id="PTHR32268">
    <property type="entry name" value="HOMOSERINE O-ACETYLTRANSFERASE"/>
    <property type="match status" value="1"/>
</dbReference>
<dbReference type="PANTHER" id="PTHR32268:SF11">
    <property type="entry name" value="HOMOSERINE O-ACETYLTRANSFERASE"/>
    <property type="match status" value="1"/>
</dbReference>
<dbReference type="Pfam" id="PF00561">
    <property type="entry name" value="Abhydrolase_1"/>
    <property type="match status" value="1"/>
</dbReference>
<dbReference type="PIRSF" id="PIRSF000443">
    <property type="entry name" value="Homoser_Ac_trans"/>
    <property type="match status" value="1"/>
</dbReference>
<dbReference type="SUPFAM" id="SSF53474">
    <property type="entry name" value="alpha/beta-Hydrolases"/>
    <property type="match status" value="1"/>
</dbReference>
<proteinExistence type="inferred from homology"/>
<accession>B3QM89</accession>
<name>METXA_CHLP8</name>
<sequence length="356" mass="39908">MTQMEYIPIISDSTSSFKSYDPFPLELGGELPELKIAYRTWGTLNAQKSNVILVCHALTGNADADSWWRGMFGEGKAFDETKDFIICSNVIGSCYGSTGPLSLNPKSGKRYGPDFPRITIRDMVAAQRLLLQSFGIEKIKLVIGASLGGMQVLEWGAMYPEMAGALMPMGISGRHSAWCIAQSEAQRQAIAADAEWQGGWYDPAQQPRKGLAAARMMAMCTYRCFENYEERFGREQREDGLFEAESYMRHQGDKLVGRFDANTYITLTRAMDMHDLGRGRESYEAALGAFTMPVEILSIDSDILYPKQEQEELARLIPGSRLLFLDEPYGHDAFLIDTDTVSRMACEFKRQLIVDN</sequence>
<evidence type="ECO:0000255" key="1">
    <source>
        <dbReference type="HAMAP-Rule" id="MF_00296"/>
    </source>
</evidence>
<organism>
    <name type="scientific">Chlorobaculum parvum (strain DSM 263 / NCIMB 8327)</name>
    <name type="common">Chlorobium vibrioforme subsp. thiosulfatophilum</name>
    <dbReference type="NCBI Taxonomy" id="517417"/>
    <lineage>
        <taxon>Bacteria</taxon>
        <taxon>Pseudomonadati</taxon>
        <taxon>Chlorobiota</taxon>
        <taxon>Chlorobiia</taxon>
        <taxon>Chlorobiales</taxon>
        <taxon>Chlorobiaceae</taxon>
        <taxon>Chlorobaculum</taxon>
    </lineage>
</organism>
<gene>
    <name evidence="1" type="primary">metXA</name>
    <name type="ordered locus">Cpar_0622</name>
</gene>
<reference key="1">
    <citation type="submission" date="2008-06" db="EMBL/GenBank/DDBJ databases">
        <title>Complete sequence of Chlorobaculum parvum NCIB 8327.</title>
        <authorList>
            <consortium name="US DOE Joint Genome Institute"/>
            <person name="Lucas S."/>
            <person name="Copeland A."/>
            <person name="Lapidus A."/>
            <person name="Glavina del Rio T."/>
            <person name="Dalin E."/>
            <person name="Tice H."/>
            <person name="Bruce D."/>
            <person name="Goodwin L."/>
            <person name="Pitluck S."/>
            <person name="Schmutz J."/>
            <person name="Larimer F."/>
            <person name="Land M."/>
            <person name="Hauser L."/>
            <person name="Kyrpides N."/>
            <person name="Mikhailova N."/>
            <person name="Zhao F."/>
            <person name="Li T."/>
            <person name="Liu Z."/>
            <person name="Overmann J."/>
            <person name="Bryant D.A."/>
            <person name="Richardson P."/>
        </authorList>
    </citation>
    <scope>NUCLEOTIDE SEQUENCE [LARGE SCALE GENOMIC DNA]</scope>
    <source>
        <strain>DSM 263 / NCIMB 8327</strain>
    </source>
</reference>
<protein>
    <recommendedName>
        <fullName evidence="1">Homoserine O-acetyltransferase</fullName>
        <shortName evidence="1">HAT</shortName>
        <ecNumber evidence="1">2.3.1.31</ecNumber>
    </recommendedName>
    <alternativeName>
        <fullName evidence="1">Homoserine transacetylase</fullName>
        <shortName evidence="1">HTA</shortName>
    </alternativeName>
</protein>